<evidence type="ECO:0000255" key="1">
    <source>
        <dbReference type="HAMAP-Rule" id="MF_01569"/>
    </source>
</evidence>
<keyword id="KW-0030">Aminoacyl-tRNA synthetase</keyword>
<keyword id="KW-0067">ATP-binding</keyword>
<keyword id="KW-0963">Cytoplasm</keyword>
<keyword id="KW-0436">Ligase</keyword>
<keyword id="KW-0547">Nucleotide-binding</keyword>
<keyword id="KW-0648">Protein biosynthesis</keyword>
<comment type="function">
    <text evidence="1">Catalyzes the attachment of proline to tRNA(Pro) in a two-step reaction: proline is first activated by ATP to form Pro-AMP and then transferred to the acceptor end of tRNA(Pro). As ProRS can inadvertently accommodate and process non-cognate amino acids such as alanine and cysteine, to avoid such errors it has two additional distinct editing activities against alanine. One activity is designated as 'pretransfer' editing and involves the tRNA(Pro)-independent hydrolysis of activated Ala-AMP. The other activity is designated 'posttransfer' editing and involves deacylation of mischarged Ala-tRNA(Pro). The misacylated Cys-tRNA(Pro) is not edited by ProRS.</text>
</comment>
<comment type="catalytic activity">
    <reaction evidence="1">
        <text>tRNA(Pro) + L-proline + ATP = L-prolyl-tRNA(Pro) + AMP + diphosphate</text>
        <dbReference type="Rhea" id="RHEA:14305"/>
        <dbReference type="Rhea" id="RHEA-COMP:9700"/>
        <dbReference type="Rhea" id="RHEA-COMP:9702"/>
        <dbReference type="ChEBI" id="CHEBI:30616"/>
        <dbReference type="ChEBI" id="CHEBI:33019"/>
        <dbReference type="ChEBI" id="CHEBI:60039"/>
        <dbReference type="ChEBI" id="CHEBI:78442"/>
        <dbReference type="ChEBI" id="CHEBI:78532"/>
        <dbReference type="ChEBI" id="CHEBI:456215"/>
        <dbReference type="EC" id="6.1.1.15"/>
    </reaction>
</comment>
<comment type="subunit">
    <text evidence="1">Homodimer.</text>
</comment>
<comment type="subcellular location">
    <subcellularLocation>
        <location evidence="1">Cytoplasm</location>
    </subcellularLocation>
</comment>
<comment type="domain">
    <text evidence="1">Consists of three domains: the N-terminal catalytic domain, the editing domain and the C-terminal anticodon-binding domain.</text>
</comment>
<comment type="similarity">
    <text evidence="1">Belongs to the class-II aminoacyl-tRNA synthetase family. ProS type 1 subfamily.</text>
</comment>
<reference key="1">
    <citation type="submission" date="2007-04" db="EMBL/GenBank/DDBJ databases">
        <title>Genome sequence of the thermophilic hydrogen-producing bacterium Caldicellulosiruptor saccharolyticus DSM 8903.</title>
        <authorList>
            <person name="Copeland A."/>
            <person name="Lucas S."/>
            <person name="Lapidus A."/>
            <person name="Barry K."/>
            <person name="Detter J.C."/>
            <person name="Glavina del Rio T."/>
            <person name="Hammon N."/>
            <person name="Israni S."/>
            <person name="Dalin E."/>
            <person name="Tice H."/>
            <person name="Pitluck S."/>
            <person name="Kiss H."/>
            <person name="Brettin T."/>
            <person name="Bruce D."/>
            <person name="Han C."/>
            <person name="Schmutz J."/>
            <person name="Larimer F."/>
            <person name="Land M."/>
            <person name="Hauser L."/>
            <person name="Kyrpides N."/>
            <person name="Lykidis A."/>
            <person name="van de Werken H.J.G."/>
            <person name="Verhaart M.R.A."/>
            <person name="VanFossen A.L."/>
            <person name="Lewis D.L."/>
            <person name="Nichols J.D."/>
            <person name="Goorissen H.P."/>
            <person name="van Niel E.W.J."/>
            <person name="Stams F.J.M."/>
            <person name="Willquist K.U."/>
            <person name="Ward D.E."/>
            <person name="van der Oost J."/>
            <person name="Kelly R.M."/>
            <person name="Kengen S.M.W."/>
            <person name="Richardson P."/>
        </authorList>
    </citation>
    <scope>NUCLEOTIDE SEQUENCE [LARGE SCALE GENOMIC DNA]</scope>
    <source>
        <strain>ATCC 43494 / DSM 8903 / Tp8T 6331</strain>
    </source>
</reference>
<dbReference type="EC" id="6.1.1.15" evidence="1"/>
<dbReference type="EMBL" id="CP000679">
    <property type="protein sequence ID" value="ABP66422.1"/>
    <property type="molecule type" value="Genomic_DNA"/>
</dbReference>
<dbReference type="RefSeq" id="WP_011916371.1">
    <property type="nucleotide sequence ID" value="NC_009437.1"/>
</dbReference>
<dbReference type="SMR" id="A4XHN7"/>
<dbReference type="STRING" id="351627.Csac_0803"/>
<dbReference type="KEGG" id="csc:Csac_0803"/>
<dbReference type="eggNOG" id="COG0442">
    <property type="taxonomic scope" value="Bacteria"/>
</dbReference>
<dbReference type="HOGENOM" id="CLU_016739_0_0_9"/>
<dbReference type="OrthoDB" id="9809052at2"/>
<dbReference type="Proteomes" id="UP000000256">
    <property type="component" value="Chromosome"/>
</dbReference>
<dbReference type="GO" id="GO:0005829">
    <property type="term" value="C:cytosol"/>
    <property type="evidence" value="ECO:0007669"/>
    <property type="project" value="TreeGrafter"/>
</dbReference>
<dbReference type="GO" id="GO:0002161">
    <property type="term" value="F:aminoacyl-tRNA deacylase activity"/>
    <property type="evidence" value="ECO:0007669"/>
    <property type="project" value="InterPro"/>
</dbReference>
<dbReference type="GO" id="GO:0005524">
    <property type="term" value="F:ATP binding"/>
    <property type="evidence" value="ECO:0007669"/>
    <property type="project" value="UniProtKB-UniRule"/>
</dbReference>
<dbReference type="GO" id="GO:0140096">
    <property type="term" value="F:catalytic activity, acting on a protein"/>
    <property type="evidence" value="ECO:0007669"/>
    <property type="project" value="UniProtKB-ARBA"/>
</dbReference>
<dbReference type="GO" id="GO:0004827">
    <property type="term" value="F:proline-tRNA ligase activity"/>
    <property type="evidence" value="ECO:0007669"/>
    <property type="project" value="UniProtKB-UniRule"/>
</dbReference>
<dbReference type="GO" id="GO:0016740">
    <property type="term" value="F:transferase activity"/>
    <property type="evidence" value="ECO:0007669"/>
    <property type="project" value="UniProtKB-ARBA"/>
</dbReference>
<dbReference type="GO" id="GO:0006433">
    <property type="term" value="P:prolyl-tRNA aminoacylation"/>
    <property type="evidence" value="ECO:0007669"/>
    <property type="project" value="UniProtKB-UniRule"/>
</dbReference>
<dbReference type="CDD" id="cd04334">
    <property type="entry name" value="ProRS-INS"/>
    <property type="match status" value="1"/>
</dbReference>
<dbReference type="CDD" id="cd00861">
    <property type="entry name" value="ProRS_anticodon_short"/>
    <property type="match status" value="1"/>
</dbReference>
<dbReference type="CDD" id="cd00779">
    <property type="entry name" value="ProRS_core_prok"/>
    <property type="match status" value="1"/>
</dbReference>
<dbReference type="FunFam" id="3.30.930.10:FF:000066">
    <property type="entry name" value="Proline--tRNA ligase"/>
    <property type="match status" value="1"/>
</dbReference>
<dbReference type="FunFam" id="3.40.50.800:FF:000011">
    <property type="entry name" value="Proline--tRNA ligase"/>
    <property type="match status" value="1"/>
</dbReference>
<dbReference type="Gene3D" id="3.40.50.800">
    <property type="entry name" value="Anticodon-binding domain"/>
    <property type="match status" value="1"/>
</dbReference>
<dbReference type="Gene3D" id="3.30.930.10">
    <property type="entry name" value="Bira Bifunctional Protein, Domain 2"/>
    <property type="match status" value="2"/>
</dbReference>
<dbReference type="Gene3D" id="3.90.960.10">
    <property type="entry name" value="YbaK/aminoacyl-tRNA synthetase-associated domain"/>
    <property type="match status" value="1"/>
</dbReference>
<dbReference type="HAMAP" id="MF_01569">
    <property type="entry name" value="Pro_tRNA_synth_type1"/>
    <property type="match status" value="1"/>
</dbReference>
<dbReference type="InterPro" id="IPR002314">
    <property type="entry name" value="aa-tRNA-synt_IIb"/>
</dbReference>
<dbReference type="InterPro" id="IPR006195">
    <property type="entry name" value="aa-tRNA-synth_II"/>
</dbReference>
<dbReference type="InterPro" id="IPR045864">
    <property type="entry name" value="aa-tRNA-synth_II/BPL/LPL"/>
</dbReference>
<dbReference type="InterPro" id="IPR004154">
    <property type="entry name" value="Anticodon-bd"/>
</dbReference>
<dbReference type="InterPro" id="IPR036621">
    <property type="entry name" value="Anticodon-bd_dom_sf"/>
</dbReference>
<dbReference type="InterPro" id="IPR002316">
    <property type="entry name" value="Pro-tRNA-ligase_IIa"/>
</dbReference>
<dbReference type="InterPro" id="IPR004500">
    <property type="entry name" value="Pro-tRNA-synth_IIa_bac-type"/>
</dbReference>
<dbReference type="InterPro" id="IPR023717">
    <property type="entry name" value="Pro-tRNA-Synthase_IIa_type1"/>
</dbReference>
<dbReference type="InterPro" id="IPR050062">
    <property type="entry name" value="Pro-tRNA_synthetase"/>
</dbReference>
<dbReference type="InterPro" id="IPR044140">
    <property type="entry name" value="ProRS_anticodon_short"/>
</dbReference>
<dbReference type="InterPro" id="IPR033730">
    <property type="entry name" value="ProRS_core_prok"/>
</dbReference>
<dbReference type="InterPro" id="IPR036754">
    <property type="entry name" value="YbaK/aa-tRNA-synt-asso_dom_sf"/>
</dbReference>
<dbReference type="InterPro" id="IPR007214">
    <property type="entry name" value="YbaK/aa-tRNA-synth-assoc-dom"/>
</dbReference>
<dbReference type="NCBIfam" id="NF006625">
    <property type="entry name" value="PRK09194.1"/>
    <property type="match status" value="1"/>
</dbReference>
<dbReference type="NCBIfam" id="TIGR00409">
    <property type="entry name" value="proS_fam_II"/>
    <property type="match status" value="1"/>
</dbReference>
<dbReference type="PANTHER" id="PTHR42753">
    <property type="entry name" value="MITOCHONDRIAL RIBOSOME PROTEIN L39/PROLYL-TRNA LIGASE FAMILY MEMBER"/>
    <property type="match status" value="1"/>
</dbReference>
<dbReference type="PANTHER" id="PTHR42753:SF2">
    <property type="entry name" value="PROLINE--TRNA LIGASE"/>
    <property type="match status" value="1"/>
</dbReference>
<dbReference type="Pfam" id="PF03129">
    <property type="entry name" value="HGTP_anticodon"/>
    <property type="match status" value="1"/>
</dbReference>
<dbReference type="Pfam" id="PF00587">
    <property type="entry name" value="tRNA-synt_2b"/>
    <property type="match status" value="1"/>
</dbReference>
<dbReference type="Pfam" id="PF04073">
    <property type="entry name" value="tRNA_edit"/>
    <property type="match status" value="1"/>
</dbReference>
<dbReference type="PIRSF" id="PIRSF001535">
    <property type="entry name" value="ProRS_1"/>
    <property type="match status" value="1"/>
</dbReference>
<dbReference type="PRINTS" id="PR01046">
    <property type="entry name" value="TRNASYNTHPRO"/>
</dbReference>
<dbReference type="SUPFAM" id="SSF52954">
    <property type="entry name" value="Class II aaRS ABD-related"/>
    <property type="match status" value="1"/>
</dbReference>
<dbReference type="SUPFAM" id="SSF55681">
    <property type="entry name" value="Class II aaRS and biotin synthetases"/>
    <property type="match status" value="1"/>
</dbReference>
<dbReference type="SUPFAM" id="SSF55826">
    <property type="entry name" value="YbaK/ProRS associated domain"/>
    <property type="match status" value="1"/>
</dbReference>
<dbReference type="PROSITE" id="PS50862">
    <property type="entry name" value="AA_TRNA_LIGASE_II"/>
    <property type="match status" value="1"/>
</dbReference>
<protein>
    <recommendedName>
        <fullName evidence="1">Proline--tRNA ligase</fullName>
        <ecNumber evidence="1">6.1.1.15</ecNumber>
    </recommendedName>
    <alternativeName>
        <fullName evidence="1">Prolyl-tRNA synthetase</fullName>
        <shortName evidence="1">ProRS</shortName>
    </alternativeName>
</protein>
<accession>A4XHN7</accession>
<gene>
    <name evidence="1" type="primary">proS</name>
    <name type="ordered locus">Csac_0803</name>
</gene>
<sequence length="572" mass="65682">MKVSELFMPTMKETPSDAEIESHKLMLRSGFMRQLSSGIYVYLPLGYRVLRKIENIVREEMDRAGAQEVHMSALMPKELWEESGRWAVFGPEMFKIKDRNEREYCLGPTHEEAFTYIVRNEVTSYRDLPKILYQIQTKFRDERRPRFGVMRCREFTMKDAYSFDMNEEGLDISYKKMYDAYVRIFKRCGLDVKIVEADTGAMGGSNSHEFMVPSSVGEAEIAYCKACGYAANLEKAECLDEPVENTEEIKQMQEVYTPNVRTIEELVNFLNIDAKRFVKTMIYRADDKFVAVLVRGDREVNETKLKNLLKANELELANAEDVERITGAKVGFAGPVGLSIEIYADNEVKYLKNFVVGSNKTDYHIKNVNLSDFKVTKFADLRNITQDDLCPKCLSQKVTIERGIEVGHIFKLGTKYTEAFNCVYTDEKGEKKLMIMGCYGIGINRTAAAIIEQMHDEDGIIWPITVAPYEVIVVPVNIKDEQQSKIAFEIYEDLQKKGVEVLIDDRDERAGVKFKDADLIGIPFRVTIGRKIADGRIEVRNRRTKESVEVDIESAVEFILNLINEEKARYKV</sequence>
<proteinExistence type="inferred from homology"/>
<name>SYP_CALS8</name>
<feature type="chain" id="PRO_1000069128" description="Proline--tRNA ligase">
    <location>
        <begin position="1"/>
        <end position="572"/>
    </location>
</feature>
<organism>
    <name type="scientific">Caldicellulosiruptor saccharolyticus (strain ATCC 43494 / DSM 8903 / Tp8T 6331)</name>
    <dbReference type="NCBI Taxonomy" id="351627"/>
    <lineage>
        <taxon>Bacteria</taxon>
        <taxon>Bacillati</taxon>
        <taxon>Bacillota</taxon>
        <taxon>Bacillota incertae sedis</taxon>
        <taxon>Caldicellulosiruptorales</taxon>
        <taxon>Caldicellulosiruptoraceae</taxon>
        <taxon>Caldicellulosiruptor</taxon>
    </lineage>
</organism>